<reference key="1">
    <citation type="journal article" date="2004" name="DNA Seq.">
        <title>Identification of LZP gene from Mus musculus and Rattus norvegicus coding for a novel liver-specific ZP domain-containing secretory protein.</title>
        <authorList>
            <person name="Xu Z.-G."/>
            <person name="Du J.-J."/>
            <person name="Cui S.J."/>
            <person name="Wang Z.-Q."/>
            <person name="Huo K.-K."/>
            <person name="Li Y.-Y."/>
            <person name="Han Z.-G."/>
        </authorList>
    </citation>
    <scope>NUCLEOTIDE SEQUENCE [MRNA]</scope>
</reference>
<name>OIT3_RAT</name>
<sequence length="546" mass="60179">MPLSLLLACLFTTVTLQSPVVLDPCSAYISLNEPWRNTDHQFDESQSQPLCDNHMDGEWYRFTGMAGDAMPTFCIPENHCGTHAPVWLNGSHPLEGDGIVQRQACASFKGNCCLWNTTVEVKACPGGYYVYRLAKPSVCFHIYCGHFYDICDEDCHGSCLDTTECACSPGTSLGPDGQTCFDENECEHNNGGCSEICVNLKNSHRCACGVGRVLRSDGKTCEDIEGCHSNNGGCSHSCLGSEKGYQCECPRGLVLSEDNHTCQVPVLCKSSAIEVSVPRELVGGLELFLTNTSCRGVSNGTHVNIIFSLKTCGTVVDVVNDKIVASNLVTGLPKQTPGSSGDIIIRTSKLLIPVTCEFPRLYTISEGYVPNLRNAPLEIRSRNHGIFPFTLEIFKDHEFEEPYRETLPTLKLRDSLYFGIEPLVHVSGLESLVESCFATPTAKVDEILKYYLIRDGCVSDDSVKQYSSRDHLAKHFQVPVFKFVGKDHKEVFLHCRVLVCGVLDERSRCAQGCHRRVRREAGEDEDSAGLQSQTLTGGPISIDWEE</sequence>
<keyword id="KW-0106">Calcium</keyword>
<keyword id="KW-1015">Disulfide bond</keyword>
<keyword id="KW-0245">EGF-like domain</keyword>
<keyword id="KW-0325">Glycoprotein</keyword>
<keyword id="KW-0539">Nucleus</keyword>
<keyword id="KW-1185">Reference proteome</keyword>
<keyword id="KW-0732">Signal</keyword>
<protein>
    <recommendedName>
        <fullName>Oncoprotein-induced transcript 3 protein</fullName>
    </recommendedName>
    <alternativeName>
        <fullName>Liver-specific zona pellucida domain-containing protein</fullName>
    </alternativeName>
</protein>
<organism>
    <name type="scientific">Rattus norvegicus</name>
    <name type="common">Rat</name>
    <dbReference type="NCBI Taxonomy" id="10116"/>
    <lineage>
        <taxon>Eukaryota</taxon>
        <taxon>Metazoa</taxon>
        <taxon>Chordata</taxon>
        <taxon>Craniata</taxon>
        <taxon>Vertebrata</taxon>
        <taxon>Euteleostomi</taxon>
        <taxon>Mammalia</taxon>
        <taxon>Eutheria</taxon>
        <taxon>Euarchontoglires</taxon>
        <taxon>Glires</taxon>
        <taxon>Rodentia</taxon>
        <taxon>Myomorpha</taxon>
        <taxon>Muroidea</taxon>
        <taxon>Muridae</taxon>
        <taxon>Murinae</taxon>
        <taxon>Rattus</taxon>
    </lineage>
</organism>
<comment type="function">
    <text evidence="1">May be involved in hepatocellular function and development.</text>
</comment>
<comment type="subcellular location">
    <subcellularLocation>
        <location evidence="1">Nucleus envelope</location>
    </subcellularLocation>
    <text evidence="1">Can be secreted into blood.</text>
</comment>
<proteinExistence type="evidence at transcript level"/>
<gene>
    <name type="primary">Oit3</name>
    <name type="synonym">Lzp</name>
</gene>
<accession>Q6V0K7</accession>
<evidence type="ECO:0000250" key="1"/>
<evidence type="ECO:0000255" key="2"/>
<evidence type="ECO:0000255" key="3">
    <source>
        <dbReference type="PROSITE-ProRule" id="PRU00375"/>
    </source>
</evidence>
<evidence type="ECO:0000256" key="4">
    <source>
        <dbReference type="SAM" id="MobiDB-lite"/>
    </source>
</evidence>
<feature type="signal peptide" evidence="2">
    <location>
        <begin position="1"/>
        <end position="16"/>
    </location>
</feature>
<feature type="chain" id="PRO_0000298933" description="Oncoprotein-induced transcript 3 protein">
    <location>
        <begin position="17"/>
        <end position="546"/>
    </location>
</feature>
<feature type="domain" description="EGF-like; calcium-binding" evidence="2">
    <location>
        <begin position="182"/>
        <end position="222"/>
    </location>
</feature>
<feature type="domain" description="ZP" evidence="3">
    <location>
        <begin position="261"/>
        <end position="516"/>
    </location>
</feature>
<feature type="region of interest" description="Disordered" evidence="4">
    <location>
        <begin position="524"/>
        <end position="546"/>
    </location>
</feature>
<feature type="glycosylation site" description="N-linked (GlcNAc...) asparagine" evidence="2">
    <location>
        <position position="89"/>
    </location>
</feature>
<feature type="glycosylation site" description="N-linked (GlcNAc...) asparagine" evidence="2">
    <location>
        <position position="116"/>
    </location>
</feature>
<feature type="glycosylation site" description="N-linked (GlcNAc...) asparagine" evidence="2">
    <location>
        <position position="299"/>
    </location>
</feature>
<feature type="disulfide bond" evidence="1">
    <location>
        <begin position="186"/>
        <end position="197"/>
    </location>
</feature>
<feature type="disulfide bond" evidence="1">
    <location>
        <begin position="193"/>
        <end position="206"/>
    </location>
</feature>
<feature type="disulfide bond" evidence="1">
    <location>
        <begin position="208"/>
        <end position="221"/>
    </location>
</feature>
<dbReference type="EMBL" id="AY356356">
    <property type="protein sequence ID" value="AAQ55823.1"/>
    <property type="molecule type" value="mRNA"/>
</dbReference>
<dbReference type="EMBL" id="AY353853">
    <property type="protein sequence ID" value="AAQ62080.1"/>
    <property type="molecule type" value="mRNA"/>
</dbReference>
<dbReference type="RefSeq" id="NP_001001507.1">
    <property type="nucleotide sequence ID" value="NM_001001507.1"/>
</dbReference>
<dbReference type="SMR" id="Q6V0K7"/>
<dbReference type="FunCoup" id="Q6V0K7">
    <property type="interactions" value="21"/>
</dbReference>
<dbReference type="STRING" id="10116.ENSRNOP00000065864"/>
<dbReference type="GlyCosmos" id="Q6V0K7">
    <property type="glycosylation" value="3 sites, No reported glycans"/>
</dbReference>
<dbReference type="GlyGen" id="Q6V0K7">
    <property type="glycosylation" value="3 sites"/>
</dbReference>
<dbReference type="PhosphoSitePlus" id="Q6V0K7"/>
<dbReference type="PaxDb" id="10116-ENSRNOP00000065864"/>
<dbReference type="Ensembl" id="ENSRNOT00000075682.2">
    <property type="protein sequence ID" value="ENSRNOP00000065864.2"/>
    <property type="gene ID" value="ENSRNOG00000046365.2"/>
</dbReference>
<dbReference type="GeneID" id="294559"/>
<dbReference type="KEGG" id="rno:294559"/>
<dbReference type="AGR" id="RGD:735082"/>
<dbReference type="CTD" id="170392"/>
<dbReference type="RGD" id="735082">
    <property type="gene designation" value="Oit3"/>
</dbReference>
<dbReference type="eggNOG" id="ENOG502QW18">
    <property type="taxonomic scope" value="Eukaryota"/>
</dbReference>
<dbReference type="GeneTree" id="ENSGT00940000157851"/>
<dbReference type="InParanoid" id="Q6V0K7"/>
<dbReference type="OMA" id="EFPRHYT"/>
<dbReference type="OrthoDB" id="2015116at2759"/>
<dbReference type="PhylomeDB" id="Q6V0K7"/>
<dbReference type="PRO" id="PR:Q6V0K7"/>
<dbReference type="Proteomes" id="UP000002494">
    <property type="component" value="Chromosome 20"/>
</dbReference>
<dbReference type="GO" id="GO:0009986">
    <property type="term" value="C:cell surface"/>
    <property type="evidence" value="ECO:0000318"/>
    <property type="project" value="GO_Central"/>
</dbReference>
<dbReference type="GO" id="GO:0005615">
    <property type="term" value="C:extracellular space"/>
    <property type="evidence" value="ECO:0000318"/>
    <property type="project" value="GO_Central"/>
</dbReference>
<dbReference type="GO" id="GO:0005635">
    <property type="term" value="C:nuclear envelope"/>
    <property type="evidence" value="ECO:0007669"/>
    <property type="project" value="UniProtKB-SubCell"/>
</dbReference>
<dbReference type="GO" id="GO:0005509">
    <property type="term" value="F:calcium ion binding"/>
    <property type="evidence" value="ECO:0007669"/>
    <property type="project" value="InterPro"/>
</dbReference>
<dbReference type="GO" id="GO:0003014">
    <property type="term" value="P:renal system process"/>
    <property type="evidence" value="ECO:0000266"/>
    <property type="project" value="RGD"/>
</dbReference>
<dbReference type="FunFam" id="2.10.25.10:FF:000203">
    <property type="entry name" value="oncoprotein-induced transcript 3 protein"/>
    <property type="match status" value="2"/>
</dbReference>
<dbReference type="FunFam" id="2.60.40.3210:FF:000004">
    <property type="entry name" value="oncoprotein-induced transcript 3 protein"/>
    <property type="match status" value="1"/>
</dbReference>
<dbReference type="FunFam" id="2.60.40.4100:FF:000007">
    <property type="entry name" value="oncoprotein-induced transcript 3 protein"/>
    <property type="match status" value="1"/>
</dbReference>
<dbReference type="Gene3D" id="2.10.25.10">
    <property type="entry name" value="Laminin"/>
    <property type="match status" value="2"/>
</dbReference>
<dbReference type="Gene3D" id="2.60.40.4100">
    <property type="entry name" value="Zona pellucida, ZP-C domain"/>
    <property type="match status" value="1"/>
</dbReference>
<dbReference type="Gene3D" id="2.60.40.3210">
    <property type="entry name" value="Zona pellucida, ZP-N domain"/>
    <property type="match status" value="1"/>
</dbReference>
<dbReference type="InterPro" id="IPR001881">
    <property type="entry name" value="EGF-like_Ca-bd_dom"/>
</dbReference>
<dbReference type="InterPro" id="IPR000742">
    <property type="entry name" value="EGF-like_dom"/>
</dbReference>
<dbReference type="InterPro" id="IPR055355">
    <property type="entry name" value="ZP-C"/>
</dbReference>
<dbReference type="InterPro" id="IPR042235">
    <property type="entry name" value="ZP-C_dom"/>
</dbReference>
<dbReference type="InterPro" id="IPR055356">
    <property type="entry name" value="ZP-N"/>
</dbReference>
<dbReference type="InterPro" id="IPR048290">
    <property type="entry name" value="ZP_chr"/>
</dbReference>
<dbReference type="InterPro" id="IPR001507">
    <property type="entry name" value="ZP_dom"/>
</dbReference>
<dbReference type="PANTHER" id="PTHR14002">
    <property type="entry name" value="ENDOGLIN/TGF-BETA RECEPTOR TYPE III"/>
    <property type="match status" value="1"/>
</dbReference>
<dbReference type="PANTHER" id="PTHR14002:SF18">
    <property type="entry name" value="ONCOPROTEIN-INDUCED TRANSCRIPT 3 PROTEIN"/>
    <property type="match status" value="1"/>
</dbReference>
<dbReference type="Pfam" id="PF23283">
    <property type="entry name" value="D8C_UMOD"/>
    <property type="match status" value="1"/>
</dbReference>
<dbReference type="Pfam" id="PF14670">
    <property type="entry name" value="FXa_inhibition"/>
    <property type="match status" value="2"/>
</dbReference>
<dbReference type="Pfam" id="PF00100">
    <property type="entry name" value="Zona_pellucida"/>
    <property type="match status" value="1"/>
</dbReference>
<dbReference type="Pfam" id="PF23344">
    <property type="entry name" value="ZP-N"/>
    <property type="match status" value="1"/>
</dbReference>
<dbReference type="PRINTS" id="PR00023">
    <property type="entry name" value="ZPELLUCIDA"/>
</dbReference>
<dbReference type="SMART" id="SM00181">
    <property type="entry name" value="EGF"/>
    <property type="match status" value="3"/>
</dbReference>
<dbReference type="SMART" id="SM00179">
    <property type="entry name" value="EGF_CA"/>
    <property type="match status" value="2"/>
</dbReference>
<dbReference type="SMART" id="SM00241">
    <property type="entry name" value="ZP"/>
    <property type="match status" value="1"/>
</dbReference>
<dbReference type="SUPFAM" id="SSF57196">
    <property type="entry name" value="EGF/Laminin"/>
    <property type="match status" value="2"/>
</dbReference>
<dbReference type="PROSITE" id="PS51034">
    <property type="entry name" value="ZP_2"/>
    <property type="match status" value="1"/>
</dbReference>